<keyword id="KW-0479">Metal-binding</keyword>
<keyword id="KW-0539">Nucleus</keyword>
<keyword id="KW-1185">Reference proteome</keyword>
<keyword id="KW-0804">Transcription</keyword>
<keyword id="KW-0805">Transcription regulation</keyword>
<keyword id="KW-0862">Zinc</keyword>
<keyword id="KW-0863">Zinc-finger</keyword>
<comment type="function">
    <text evidence="2">Plant-specific TFIIB-related protein that plays important roles in pollen germination and embryogenesis, possibly by regulating gene expression through interaction with TBP2 and the subunits of RNA polymerases. Binds double-stranded DNA in vitro.</text>
</comment>
<comment type="subunit">
    <text evidence="2">Can form homodimer (PubMed:23713077). Interacts with TBP2 (PubMed:23713077).</text>
</comment>
<comment type="subcellular location">
    <subcellularLocation>
        <location evidence="2">Nucleus</location>
    </subcellularLocation>
</comment>
<comment type="tissue specificity">
    <text evidence="2">Expressed in shoot apical meristems, root tips, primordia of lateral roots, inflorescences, developing pollen grains and embryos.</text>
</comment>
<comment type="developmental stage">
    <text evidence="2">In developing pollen grains, expressed in the vegetative nuclei at the early binucleate stage and during the second pollen mitosis. Expression significantly decreases at the late trinucleate developmental stage. Not expressed in released mature pollen grains, germinating pollen grains and pollen tubes.</text>
</comment>
<comment type="disruption phenotype">
    <text evidence="2">Embryonic lethality and aborted seed when homozygous.</text>
</comment>
<gene>
    <name evidence="3" type="primary">PTF2</name>
    <name evidence="5" type="ordered locus">At4g35540</name>
    <name evidence="6" type="ORF">F8D20.50</name>
</gene>
<proteinExistence type="evidence at protein level"/>
<dbReference type="EMBL" id="AL031135">
    <property type="protein sequence ID" value="CAA20024.1"/>
    <property type="molecule type" value="Genomic_DNA"/>
</dbReference>
<dbReference type="EMBL" id="AL161587">
    <property type="protein sequence ID" value="CAB80270.1"/>
    <property type="molecule type" value="Genomic_DNA"/>
</dbReference>
<dbReference type="EMBL" id="CP002687">
    <property type="protein sequence ID" value="AEE86528.1"/>
    <property type="molecule type" value="Genomic_DNA"/>
</dbReference>
<dbReference type="PIR" id="T04659">
    <property type="entry name" value="T04659"/>
</dbReference>
<dbReference type="RefSeq" id="NP_195279.1">
    <property type="nucleotide sequence ID" value="NM_119719.2"/>
</dbReference>
<dbReference type="SMR" id="O81787"/>
<dbReference type="FunCoup" id="O81787">
    <property type="interactions" value="118"/>
</dbReference>
<dbReference type="STRING" id="3702.O81787"/>
<dbReference type="PaxDb" id="3702-AT4G35540.1"/>
<dbReference type="ProteomicsDB" id="248697"/>
<dbReference type="EnsemblPlants" id="AT4G35540.1">
    <property type="protein sequence ID" value="AT4G35540.1"/>
    <property type="gene ID" value="AT4G35540"/>
</dbReference>
<dbReference type="GeneID" id="829706"/>
<dbReference type="Gramene" id="AT4G35540.1">
    <property type="protein sequence ID" value="AT4G35540.1"/>
    <property type="gene ID" value="AT4G35540"/>
</dbReference>
<dbReference type="KEGG" id="ath:AT4G35540"/>
<dbReference type="Araport" id="AT4G35540"/>
<dbReference type="TAIR" id="AT4G35540">
    <property type="gene designation" value="PTF2"/>
</dbReference>
<dbReference type="eggNOG" id="KOG1598">
    <property type="taxonomic scope" value="Eukaryota"/>
</dbReference>
<dbReference type="HOGENOM" id="CLU_039109_0_0_1"/>
<dbReference type="InParanoid" id="O81787"/>
<dbReference type="OMA" id="GWTKDMV"/>
<dbReference type="OrthoDB" id="511529at2759"/>
<dbReference type="PhylomeDB" id="O81787"/>
<dbReference type="PRO" id="PR:O81787"/>
<dbReference type="Proteomes" id="UP000006548">
    <property type="component" value="Chromosome 4"/>
</dbReference>
<dbReference type="ExpressionAtlas" id="O81787">
    <property type="expression patterns" value="baseline and differential"/>
</dbReference>
<dbReference type="GO" id="GO:0005634">
    <property type="term" value="C:nucleus"/>
    <property type="evidence" value="ECO:0000314"/>
    <property type="project" value="TAIR"/>
</dbReference>
<dbReference type="GO" id="GO:0003690">
    <property type="term" value="F:double-stranded DNA binding"/>
    <property type="evidence" value="ECO:0000314"/>
    <property type="project" value="TAIR"/>
</dbReference>
<dbReference type="GO" id="GO:0042803">
    <property type="term" value="F:protein homodimerization activity"/>
    <property type="evidence" value="ECO:0000353"/>
    <property type="project" value="UniProtKB"/>
</dbReference>
<dbReference type="GO" id="GO:0070063">
    <property type="term" value="F:RNA polymerase binding"/>
    <property type="evidence" value="ECO:0000314"/>
    <property type="project" value="TAIR"/>
</dbReference>
<dbReference type="GO" id="GO:0001093">
    <property type="term" value="F:TFIIB-class transcription factor binding"/>
    <property type="evidence" value="ECO:0000314"/>
    <property type="project" value="TAIR"/>
</dbReference>
<dbReference type="GO" id="GO:0008270">
    <property type="term" value="F:zinc ion binding"/>
    <property type="evidence" value="ECO:0007669"/>
    <property type="project" value="UniProtKB-KW"/>
</dbReference>
<dbReference type="GO" id="GO:0009793">
    <property type="term" value="P:embryo development ending in seed dormancy"/>
    <property type="evidence" value="ECO:0000315"/>
    <property type="project" value="TAIR"/>
</dbReference>
<dbReference type="GO" id="GO:0009846">
    <property type="term" value="P:pollen germination"/>
    <property type="evidence" value="ECO:0000315"/>
    <property type="project" value="TAIR"/>
</dbReference>
<dbReference type="Gene3D" id="1.10.472.170">
    <property type="match status" value="1"/>
</dbReference>
<dbReference type="Gene3D" id="1.10.472.10">
    <property type="entry name" value="Cyclin-like"/>
    <property type="match status" value="1"/>
</dbReference>
<dbReference type="InterPro" id="IPR054078">
    <property type="entry name" value="BRF2-like_C"/>
</dbReference>
<dbReference type="InterPro" id="IPR036915">
    <property type="entry name" value="Cyclin-like_sf"/>
</dbReference>
<dbReference type="InterPro" id="IPR053340">
    <property type="entry name" value="PTF2"/>
</dbReference>
<dbReference type="InterPro" id="IPR013137">
    <property type="entry name" value="Znf_TFIIB"/>
</dbReference>
<dbReference type="PANTHER" id="PTHR48428">
    <property type="entry name" value="PLANT-SPECIFIC TFIIB-RELATED PROTEIN PTF2"/>
    <property type="match status" value="1"/>
</dbReference>
<dbReference type="PANTHER" id="PTHR48428:SF1">
    <property type="entry name" value="PLANT-SPECIFIC TFIIB-RELATED PROTEIN PTF2"/>
    <property type="match status" value="1"/>
</dbReference>
<dbReference type="Pfam" id="PF21886">
    <property type="entry name" value="BRF2-like_C_cyclin_rpt"/>
    <property type="match status" value="1"/>
</dbReference>
<dbReference type="Pfam" id="PF08271">
    <property type="entry name" value="Zn_Ribbon_TF"/>
    <property type="match status" value="1"/>
</dbReference>
<dbReference type="SUPFAM" id="SSF47954">
    <property type="entry name" value="Cyclin-like"/>
    <property type="match status" value="1"/>
</dbReference>
<feature type="chain" id="PRO_0000436816" description="Plant-specific TFIIB-related protein PTF2">
    <location>
        <begin position="1"/>
        <end position="527"/>
    </location>
</feature>
<feature type="zinc finger region" description="TFIIB-type" evidence="1">
    <location>
        <begin position="1"/>
        <end position="30"/>
    </location>
</feature>
<protein>
    <recommendedName>
        <fullName evidence="4">Plant-specific TFIIB-related protein PTF2</fullName>
    </recommendedName>
    <alternativeName>
        <fullName evidence="3">Protein POLLEN-EXPRESSED TRANSCRIPTION FACTOR 2</fullName>
    </alternativeName>
    <alternativeName>
        <fullName evidence="4">TFIIB-related protein PTF2</fullName>
    </alternativeName>
</protein>
<accession>O81787</accession>
<evidence type="ECO:0000255" key="1">
    <source>
        <dbReference type="PROSITE-ProRule" id="PRU00469"/>
    </source>
</evidence>
<evidence type="ECO:0000269" key="2">
    <source>
    </source>
</evidence>
<evidence type="ECO:0000303" key="3">
    <source>
    </source>
</evidence>
<evidence type="ECO:0000305" key="4"/>
<evidence type="ECO:0000312" key="5">
    <source>
        <dbReference type="Araport" id="AT4G35540"/>
    </source>
</evidence>
<evidence type="ECO:0000312" key="6">
    <source>
        <dbReference type="EMBL" id="CAA20024.1"/>
    </source>
</evidence>
<sequence length="527" mass="59591">MRCKRCNGSNFERDEDTGNSYCGGCGTLREYDNYEAQLGGIRGPQGTYIRVGTIGRGSVLDYKDKKIYEANNLIEETTERLNLGNKTEVIKSMISKLTDGEFGQGEWFPILIGACCYAVVREEGKGVLSMEEVAYEVGCDLHQLGPMIKRVVDHLDLELREFDLVGLFTKTVTNSPRLTDVDRDKKEKIIKQGTFLMNCALKWFLSTGRRPMPLVVAVLAFVVQVNGVKVKIDDLAKDASVSLTTCKTRYKELSEKLVKVAEEVGLPWAKDVTVKNVLKHSGTLFALMEAKSMKKRKQGTGKELVRTDGFCVEDLVMDCLSKESMYCYDDDARQDTMSRYFDVEGERQLSLCNYDDNISENQLSTKYNEFEDRVCGGTLAKRSQGSSQSMWQRRSVFGMVSTENWWKGKSELSKRLLLKDLLEKDVGLEALPPSYIKGCVAVERRREKIKAAKLRINAIQHPSDNVSEGALSLELEHSKKKRKKGSEIDWEDLVIQTLVLHNVNEEEIEKGHYKTLLDLHVFNSGEV</sequence>
<reference key="1">
    <citation type="journal article" date="1999" name="Nature">
        <title>Sequence and analysis of chromosome 4 of the plant Arabidopsis thaliana.</title>
        <authorList>
            <person name="Mayer K.F.X."/>
            <person name="Schueller C."/>
            <person name="Wambutt R."/>
            <person name="Murphy G."/>
            <person name="Volckaert G."/>
            <person name="Pohl T."/>
            <person name="Duesterhoeft A."/>
            <person name="Stiekema W."/>
            <person name="Entian K.-D."/>
            <person name="Terryn N."/>
            <person name="Harris B."/>
            <person name="Ansorge W."/>
            <person name="Brandt P."/>
            <person name="Grivell L.A."/>
            <person name="Rieger M."/>
            <person name="Weichselgartner M."/>
            <person name="de Simone V."/>
            <person name="Obermaier B."/>
            <person name="Mache R."/>
            <person name="Mueller M."/>
            <person name="Kreis M."/>
            <person name="Delseny M."/>
            <person name="Puigdomenech P."/>
            <person name="Watson M."/>
            <person name="Schmidtheini T."/>
            <person name="Reichert B."/>
            <person name="Portetelle D."/>
            <person name="Perez-Alonso M."/>
            <person name="Boutry M."/>
            <person name="Bancroft I."/>
            <person name="Vos P."/>
            <person name="Hoheisel J."/>
            <person name="Zimmermann W."/>
            <person name="Wedler H."/>
            <person name="Ridley P."/>
            <person name="Langham S.-A."/>
            <person name="McCullagh B."/>
            <person name="Bilham L."/>
            <person name="Robben J."/>
            <person name="van der Schueren J."/>
            <person name="Grymonprez B."/>
            <person name="Chuang Y.-J."/>
            <person name="Vandenbussche F."/>
            <person name="Braeken M."/>
            <person name="Weltjens I."/>
            <person name="Voet M."/>
            <person name="Bastiaens I."/>
            <person name="Aert R."/>
            <person name="Defoor E."/>
            <person name="Weitzenegger T."/>
            <person name="Bothe G."/>
            <person name="Ramsperger U."/>
            <person name="Hilbert H."/>
            <person name="Braun M."/>
            <person name="Holzer E."/>
            <person name="Brandt A."/>
            <person name="Peters S."/>
            <person name="van Staveren M."/>
            <person name="Dirkse W."/>
            <person name="Mooijman P."/>
            <person name="Klein Lankhorst R."/>
            <person name="Rose M."/>
            <person name="Hauf J."/>
            <person name="Koetter P."/>
            <person name="Berneiser S."/>
            <person name="Hempel S."/>
            <person name="Feldpausch M."/>
            <person name="Lamberth S."/>
            <person name="Van den Daele H."/>
            <person name="De Keyser A."/>
            <person name="Buysshaert C."/>
            <person name="Gielen J."/>
            <person name="Villarroel R."/>
            <person name="De Clercq R."/>
            <person name="van Montagu M."/>
            <person name="Rogers J."/>
            <person name="Cronin A."/>
            <person name="Quail M.A."/>
            <person name="Bray-Allen S."/>
            <person name="Clark L."/>
            <person name="Doggett J."/>
            <person name="Hall S."/>
            <person name="Kay M."/>
            <person name="Lennard N."/>
            <person name="McLay K."/>
            <person name="Mayes R."/>
            <person name="Pettett A."/>
            <person name="Rajandream M.A."/>
            <person name="Lyne M."/>
            <person name="Benes V."/>
            <person name="Rechmann S."/>
            <person name="Borkova D."/>
            <person name="Bloecker H."/>
            <person name="Scharfe M."/>
            <person name="Grimm M."/>
            <person name="Loehnert T.-H."/>
            <person name="Dose S."/>
            <person name="de Haan M."/>
            <person name="Maarse A.C."/>
            <person name="Schaefer M."/>
            <person name="Mueller-Auer S."/>
            <person name="Gabel C."/>
            <person name="Fuchs M."/>
            <person name="Fartmann B."/>
            <person name="Granderath K."/>
            <person name="Dauner D."/>
            <person name="Herzl A."/>
            <person name="Neumann S."/>
            <person name="Argiriou A."/>
            <person name="Vitale D."/>
            <person name="Liguori R."/>
            <person name="Piravandi E."/>
            <person name="Massenet O."/>
            <person name="Quigley F."/>
            <person name="Clabauld G."/>
            <person name="Muendlein A."/>
            <person name="Felber R."/>
            <person name="Schnabl S."/>
            <person name="Hiller R."/>
            <person name="Schmidt W."/>
            <person name="Lecharny A."/>
            <person name="Aubourg S."/>
            <person name="Chefdor F."/>
            <person name="Cooke R."/>
            <person name="Berger C."/>
            <person name="Monfort A."/>
            <person name="Casacuberta E."/>
            <person name="Gibbons T."/>
            <person name="Weber N."/>
            <person name="Vandenbol M."/>
            <person name="Bargues M."/>
            <person name="Terol J."/>
            <person name="Torres A."/>
            <person name="Perez-Perez A."/>
            <person name="Purnelle B."/>
            <person name="Bent E."/>
            <person name="Johnson S."/>
            <person name="Tacon D."/>
            <person name="Jesse T."/>
            <person name="Heijnen L."/>
            <person name="Schwarz S."/>
            <person name="Scholler P."/>
            <person name="Heber S."/>
            <person name="Francs P."/>
            <person name="Bielke C."/>
            <person name="Frishman D."/>
            <person name="Haase D."/>
            <person name="Lemcke K."/>
            <person name="Mewes H.-W."/>
            <person name="Stocker S."/>
            <person name="Zaccaria P."/>
            <person name="Bevan M."/>
            <person name="Wilson R.K."/>
            <person name="de la Bastide M."/>
            <person name="Habermann K."/>
            <person name="Parnell L."/>
            <person name="Dedhia N."/>
            <person name="Gnoj L."/>
            <person name="Schutz K."/>
            <person name="Huang E."/>
            <person name="Spiegel L."/>
            <person name="Sekhon M."/>
            <person name="Murray J."/>
            <person name="Sheet P."/>
            <person name="Cordes M."/>
            <person name="Abu-Threideh J."/>
            <person name="Stoneking T."/>
            <person name="Kalicki J."/>
            <person name="Graves T."/>
            <person name="Harmon G."/>
            <person name="Edwards J."/>
            <person name="Latreille P."/>
            <person name="Courtney L."/>
            <person name="Cloud J."/>
            <person name="Abbott A."/>
            <person name="Scott K."/>
            <person name="Johnson D."/>
            <person name="Minx P."/>
            <person name="Bentley D."/>
            <person name="Fulton B."/>
            <person name="Miller N."/>
            <person name="Greco T."/>
            <person name="Kemp K."/>
            <person name="Kramer J."/>
            <person name="Fulton L."/>
            <person name="Mardis E."/>
            <person name="Dante M."/>
            <person name="Pepin K."/>
            <person name="Hillier L.W."/>
            <person name="Nelson J."/>
            <person name="Spieth J."/>
            <person name="Ryan E."/>
            <person name="Andrews S."/>
            <person name="Geisel C."/>
            <person name="Layman D."/>
            <person name="Du H."/>
            <person name="Ali J."/>
            <person name="Berghoff A."/>
            <person name="Jones K."/>
            <person name="Drone K."/>
            <person name="Cotton M."/>
            <person name="Joshu C."/>
            <person name="Antonoiu B."/>
            <person name="Zidanic M."/>
            <person name="Strong C."/>
            <person name="Sun H."/>
            <person name="Lamar B."/>
            <person name="Yordan C."/>
            <person name="Ma P."/>
            <person name="Zhong J."/>
            <person name="Preston R."/>
            <person name="Vil D."/>
            <person name="Shekher M."/>
            <person name="Matero A."/>
            <person name="Shah R."/>
            <person name="Swaby I.K."/>
            <person name="O'Shaughnessy A."/>
            <person name="Rodriguez M."/>
            <person name="Hoffman J."/>
            <person name="Till S."/>
            <person name="Granat S."/>
            <person name="Shohdy N."/>
            <person name="Hasegawa A."/>
            <person name="Hameed A."/>
            <person name="Lodhi M."/>
            <person name="Johnson A."/>
            <person name="Chen E."/>
            <person name="Marra M.A."/>
            <person name="Martienssen R."/>
            <person name="McCombie W.R."/>
        </authorList>
    </citation>
    <scope>NUCLEOTIDE SEQUENCE [LARGE SCALE GENOMIC DNA]</scope>
    <source>
        <strain>cv. Columbia</strain>
    </source>
</reference>
<reference key="2">
    <citation type="journal article" date="2017" name="Plant J.">
        <title>Araport11: a complete reannotation of the Arabidopsis thaliana reference genome.</title>
        <authorList>
            <person name="Cheng C.Y."/>
            <person name="Krishnakumar V."/>
            <person name="Chan A.P."/>
            <person name="Thibaud-Nissen F."/>
            <person name="Schobel S."/>
            <person name="Town C.D."/>
        </authorList>
    </citation>
    <scope>GENOME REANNOTATION</scope>
    <source>
        <strain>cv. Columbia</strain>
    </source>
</reference>
<reference key="3">
    <citation type="journal article" date="2013" name="Mol. Plant">
        <title>Pollen-expressed transcription factor 2 encodes a novel plant-specific TFIIB-related protein that is required for pollen germination and embryogenesis in Arabidopsis.</title>
        <authorList>
            <person name="Niu Q.K."/>
            <person name="Liang Y."/>
            <person name="Zhou J.J."/>
            <person name="Dou X.Y."/>
            <person name="Gao S.C."/>
            <person name="Chen L.Q."/>
            <person name="Zhang X.Q."/>
            <person name="Ye D."/>
        </authorList>
    </citation>
    <scope>FUNCTION</scope>
    <scope>SUBUNIT</scope>
    <scope>INTERACTION WITH TBP2</scope>
    <scope>SUBCELLULAR LOCATION</scope>
    <scope>TISSUE SPECIFICITY</scope>
    <scope>DEVELOPMENTAL STAGE</scope>
    <scope>DISRUPTION PHENOTYPE</scope>
</reference>
<name>PTF2_ARATH</name>
<organism>
    <name type="scientific">Arabidopsis thaliana</name>
    <name type="common">Mouse-ear cress</name>
    <dbReference type="NCBI Taxonomy" id="3702"/>
    <lineage>
        <taxon>Eukaryota</taxon>
        <taxon>Viridiplantae</taxon>
        <taxon>Streptophyta</taxon>
        <taxon>Embryophyta</taxon>
        <taxon>Tracheophyta</taxon>
        <taxon>Spermatophyta</taxon>
        <taxon>Magnoliopsida</taxon>
        <taxon>eudicotyledons</taxon>
        <taxon>Gunneridae</taxon>
        <taxon>Pentapetalae</taxon>
        <taxon>rosids</taxon>
        <taxon>malvids</taxon>
        <taxon>Brassicales</taxon>
        <taxon>Brassicaceae</taxon>
        <taxon>Camelineae</taxon>
        <taxon>Arabidopsis</taxon>
    </lineage>
</organism>